<proteinExistence type="inferred from homology"/>
<reference key="1">
    <citation type="journal article" date="2008" name="Genome Biol.">
        <title>The complete genome, comparative and functional analysis of Stenotrophomonas maltophilia reveals an organism heavily shielded by drug resistance determinants.</title>
        <authorList>
            <person name="Crossman L.C."/>
            <person name="Gould V.C."/>
            <person name="Dow J.M."/>
            <person name="Vernikos G.S."/>
            <person name="Okazaki A."/>
            <person name="Sebaihia M."/>
            <person name="Saunders D."/>
            <person name="Arrowsmith C."/>
            <person name="Carver T."/>
            <person name="Peters N."/>
            <person name="Adlem E."/>
            <person name="Kerhornou A."/>
            <person name="Lord A."/>
            <person name="Murphy L."/>
            <person name="Seeger K."/>
            <person name="Squares R."/>
            <person name="Rutter S."/>
            <person name="Quail M.A."/>
            <person name="Rajandream M.A."/>
            <person name="Harris D."/>
            <person name="Churcher C."/>
            <person name="Bentley S.D."/>
            <person name="Parkhill J."/>
            <person name="Thomson N.R."/>
            <person name="Avison M.B."/>
        </authorList>
    </citation>
    <scope>NUCLEOTIDE SEQUENCE [LARGE SCALE GENOMIC DNA]</scope>
    <source>
        <strain>K279a</strain>
    </source>
</reference>
<protein>
    <recommendedName>
        <fullName evidence="1">Protease HtpX</fullName>
        <ecNumber evidence="1">3.4.24.-</ecNumber>
    </recommendedName>
    <alternativeName>
        <fullName evidence="1">Heat shock protein HtpX</fullName>
    </alternativeName>
</protein>
<keyword id="KW-0997">Cell inner membrane</keyword>
<keyword id="KW-1003">Cell membrane</keyword>
<keyword id="KW-0378">Hydrolase</keyword>
<keyword id="KW-0472">Membrane</keyword>
<keyword id="KW-0479">Metal-binding</keyword>
<keyword id="KW-0482">Metalloprotease</keyword>
<keyword id="KW-0645">Protease</keyword>
<keyword id="KW-1185">Reference proteome</keyword>
<keyword id="KW-0346">Stress response</keyword>
<keyword id="KW-0812">Transmembrane</keyword>
<keyword id="KW-1133">Transmembrane helix</keyword>
<keyword id="KW-0862">Zinc</keyword>
<sequence length="288" mass="30663">MLTRIALFLATNFAVLILASIVMSLLGVNPSQMSGLLVMAAIFGFGGSFISLLLSKWMAKRSTGAVVITEPRNQTERWLLATVERQAKAAGIGMPEVAVYEGPEINAFATGANRNNALVAVSTGLLHNMSEDEAEAVLGHEIAHVANGDMITMALLQGVLNTFVIVLARVVGGIIDSALSGNREGGGRGFAYYIIVFVLEMVFGLFATMISMWFSRHREFRADAGGASLAGRQKMIAALERLQLNHGQSTLPTQIAAFGIAGSTAKKLFMSHPPLEERIAALRASTVA</sequence>
<comment type="cofactor">
    <cofactor evidence="1">
        <name>Zn(2+)</name>
        <dbReference type="ChEBI" id="CHEBI:29105"/>
    </cofactor>
    <text evidence="1">Binds 1 zinc ion per subunit.</text>
</comment>
<comment type="subcellular location">
    <subcellularLocation>
        <location evidence="1">Cell inner membrane</location>
        <topology evidence="1">Multi-pass membrane protein</topology>
    </subcellularLocation>
</comment>
<comment type="similarity">
    <text evidence="1">Belongs to the peptidase M48B family.</text>
</comment>
<gene>
    <name evidence="1" type="primary">htpX</name>
    <name type="ordered locus">Smlt3323</name>
</gene>
<evidence type="ECO:0000255" key="1">
    <source>
        <dbReference type="HAMAP-Rule" id="MF_00188"/>
    </source>
</evidence>
<feature type="chain" id="PRO_1000098850" description="Protease HtpX">
    <location>
        <begin position="1"/>
        <end position="288"/>
    </location>
</feature>
<feature type="transmembrane region" description="Helical" evidence="1">
    <location>
        <begin position="5"/>
        <end position="25"/>
    </location>
</feature>
<feature type="transmembrane region" description="Helical" evidence="1">
    <location>
        <begin position="35"/>
        <end position="55"/>
    </location>
</feature>
<feature type="transmembrane region" description="Helical" evidence="1">
    <location>
        <begin position="155"/>
        <end position="175"/>
    </location>
</feature>
<feature type="transmembrane region" description="Helical" evidence="1">
    <location>
        <begin position="194"/>
        <end position="214"/>
    </location>
</feature>
<feature type="active site" evidence="1">
    <location>
        <position position="141"/>
    </location>
</feature>
<feature type="binding site" evidence="1">
    <location>
        <position position="140"/>
    </location>
    <ligand>
        <name>Zn(2+)</name>
        <dbReference type="ChEBI" id="CHEBI:29105"/>
        <note>catalytic</note>
    </ligand>
</feature>
<feature type="binding site" evidence="1">
    <location>
        <position position="144"/>
    </location>
    <ligand>
        <name>Zn(2+)</name>
        <dbReference type="ChEBI" id="CHEBI:29105"/>
        <note>catalytic</note>
    </ligand>
</feature>
<feature type="binding site" evidence="1">
    <location>
        <position position="219"/>
    </location>
    <ligand>
        <name>Zn(2+)</name>
        <dbReference type="ChEBI" id="CHEBI:29105"/>
        <note>catalytic</note>
    </ligand>
</feature>
<accession>B2FN30</accession>
<name>HTPX_STRMK</name>
<organism>
    <name type="scientific">Stenotrophomonas maltophilia (strain K279a)</name>
    <dbReference type="NCBI Taxonomy" id="522373"/>
    <lineage>
        <taxon>Bacteria</taxon>
        <taxon>Pseudomonadati</taxon>
        <taxon>Pseudomonadota</taxon>
        <taxon>Gammaproteobacteria</taxon>
        <taxon>Lysobacterales</taxon>
        <taxon>Lysobacteraceae</taxon>
        <taxon>Stenotrophomonas</taxon>
        <taxon>Stenotrophomonas maltophilia group</taxon>
    </lineage>
</organism>
<dbReference type="EC" id="3.4.24.-" evidence="1"/>
<dbReference type="EMBL" id="AM743169">
    <property type="protein sequence ID" value="CAQ46757.1"/>
    <property type="molecule type" value="Genomic_DNA"/>
</dbReference>
<dbReference type="RefSeq" id="WP_012480842.1">
    <property type="nucleotide sequence ID" value="NC_010943.1"/>
</dbReference>
<dbReference type="SMR" id="B2FN30"/>
<dbReference type="MEROPS" id="M48.002"/>
<dbReference type="EnsemblBacteria" id="CAQ46757">
    <property type="protein sequence ID" value="CAQ46757"/>
    <property type="gene ID" value="Smlt3323"/>
</dbReference>
<dbReference type="KEGG" id="sml:Smlt3323"/>
<dbReference type="PATRIC" id="fig|522373.3.peg.3118"/>
<dbReference type="eggNOG" id="COG0501">
    <property type="taxonomic scope" value="Bacteria"/>
</dbReference>
<dbReference type="HOGENOM" id="CLU_042266_1_0_6"/>
<dbReference type="Proteomes" id="UP000008840">
    <property type="component" value="Chromosome"/>
</dbReference>
<dbReference type="GO" id="GO:0005886">
    <property type="term" value="C:plasma membrane"/>
    <property type="evidence" value="ECO:0007669"/>
    <property type="project" value="UniProtKB-SubCell"/>
</dbReference>
<dbReference type="GO" id="GO:0004222">
    <property type="term" value="F:metalloendopeptidase activity"/>
    <property type="evidence" value="ECO:0007669"/>
    <property type="project" value="UniProtKB-UniRule"/>
</dbReference>
<dbReference type="GO" id="GO:0008270">
    <property type="term" value="F:zinc ion binding"/>
    <property type="evidence" value="ECO:0007669"/>
    <property type="project" value="UniProtKB-UniRule"/>
</dbReference>
<dbReference type="GO" id="GO:0006508">
    <property type="term" value="P:proteolysis"/>
    <property type="evidence" value="ECO:0007669"/>
    <property type="project" value="UniProtKB-KW"/>
</dbReference>
<dbReference type="CDD" id="cd07335">
    <property type="entry name" value="M48B_HtpX_like"/>
    <property type="match status" value="1"/>
</dbReference>
<dbReference type="Gene3D" id="3.30.2010.10">
    <property type="entry name" value="Metalloproteases ('zincins'), catalytic domain"/>
    <property type="match status" value="1"/>
</dbReference>
<dbReference type="HAMAP" id="MF_00188">
    <property type="entry name" value="Pept_M48_protease_HtpX"/>
    <property type="match status" value="1"/>
</dbReference>
<dbReference type="InterPro" id="IPR050083">
    <property type="entry name" value="HtpX_protease"/>
</dbReference>
<dbReference type="InterPro" id="IPR022919">
    <property type="entry name" value="Pept_M48_protease_HtpX"/>
</dbReference>
<dbReference type="InterPro" id="IPR001915">
    <property type="entry name" value="Peptidase_M48"/>
</dbReference>
<dbReference type="NCBIfam" id="NF003965">
    <property type="entry name" value="PRK05457.1"/>
    <property type="match status" value="1"/>
</dbReference>
<dbReference type="PANTHER" id="PTHR43221">
    <property type="entry name" value="PROTEASE HTPX"/>
    <property type="match status" value="1"/>
</dbReference>
<dbReference type="PANTHER" id="PTHR43221:SF1">
    <property type="entry name" value="PROTEASE HTPX"/>
    <property type="match status" value="1"/>
</dbReference>
<dbReference type="Pfam" id="PF01435">
    <property type="entry name" value="Peptidase_M48"/>
    <property type="match status" value="1"/>
</dbReference>